<comment type="function">
    <text evidence="1">Structural component of the T=16 icosahedral capsid. The capsid is composed of pentamers and hexamers of major capsid protein/MCP, which are linked together by heterotrimers called triplexes. These triplexes are formed by a single molecule of triplex protein 1/TRX1 and two copies of triplex protein 2/TRX2. Additionally, TRX1 is required for efficient transport of TRX2 to the nucleus, which is the site of capsid assembly.</text>
</comment>
<comment type="subunit">
    <text evidence="1">Interacts with TRX1 and major capisd protein/MCP.</text>
</comment>
<comment type="subcellular location">
    <subcellularLocation>
        <location evidence="1">Virion</location>
    </subcellularLocation>
    <subcellularLocation>
        <location evidence="1">Host nucleus</location>
    </subcellularLocation>
</comment>
<comment type="similarity">
    <text evidence="1">Belongs to the herpesviridae TRX2 protein family.</text>
</comment>
<protein>
    <recommendedName>
        <fullName evidence="1">Triplex capsid protein 2</fullName>
    </recommendedName>
</protein>
<accession>Q9QJ27</accession>
<name>TRX2_HHV6Z</name>
<keyword id="KW-0002">3D-structure</keyword>
<keyword id="KW-0167">Capsid protein</keyword>
<keyword id="KW-1048">Host nucleus</keyword>
<keyword id="KW-1185">Reference proteome</keyword>
<keyword id="KW-0946">Virion</keyword>
<evidence type="ECO:0000255" key="1">
    <source>
        <dbReference type="HAMAP-Rule" id="MF_04019"/>
    </source>
</evidence>
<reference key="1">
    <citation type="journal article" date="1999" name="J. Virol.">
        <title>Human herpesvirus 6B genome sequence: coding content and comparison with human herpesvirus 6A.</title>
        <authorList>
            <person name="Dominguez G."/>
            <person name="Dambaugh T.R."/>
            <person name="Stamey F.R."/>
            <person name="Dewhurst S."/>
            <person name="Inoue N."/>
            <person name="Pellett P.E."/>
        </authorList>
    </citation>
    <scope>NUCLEOTIDE SEQUENCE [LARGE SCALE GENOMIC DNA]</scope>
</reference>
<proteinExistence type="evidence at protein level"/>
<dbReference type="EMBL" id="AF157706">
    <property type="protein sequence ID" value="AAD49659.1"/>
    <property type="molecule type" value="Genomic_DNA"/>
</dbReference>
<dbReference type="RefSeq" id="NP_050237.1">
    <property type="nucleotide sequence ID" value="NC_000898.1"/>
</dbReference>
<dbReference type="PDB" id="6Q1F">
    <property type="method" value="EM"/>
    <property type="resolution" value="9.00 A"/>
    <property type="chains" value="6/7/W/X/Y/Z/a/b/c/d=1-296"/>
</dbReference>
<dbReference type="PDBsum" id="6Q1F"/>
<dbReference type="EMDB" id="EMD-20557"/>
<dbReference type="SMR" id="Q9QJ27"/>
<dbReference type="DNASU" id="1497058"/>
<dbReference type="GeneID" id="1497058"/>
<dbReference type="KEGG" id="vg:1497058"/>
<dbReference type="Proteomes" id="UP000006930">
    <property type="component" value="Segment"/>
</dbReference>
<dbReference type="GO" id="GO:0042025">
    <property type="term" value="C:host cell nucleus"/>
    <property type="evidence" value="ECO:0007669"/>
    <property type="project" value="UniProtKB-SubCell"/>
</dbReference>
<dbReference type="GO" id="GO:0019028">
    <property type="term" value="C:viral capsid"/>
    <property type="evidence" value="ECO:0007669"/>
    <property type="project" value="UniProtKB-KW"/>
</dbReference>
<dbReference type="GO" id="GO:0005198">
    <property type="term" value="F:structural molecule activity"/>
    <property type="evidence" value="ECO:0007669"/>
    <property type="project" value="InterPro"/>
</dbReference>
<dbReference type="HAMAP" id="MF_04019">
    <property type="entry name" value="HSV_TRX2"/>
    <property type="match status" value="1"/>
</dbReference>
<dbReference type="InterPro" id="IPR002690">
    <property type="entry name" value="Herpes_capsid_2"/>
</dbReference>
<dbReference type="Pfam" id="PF01802">
    <property type="entry name" value="Herpes_V23"/>
    <property type="match status" value="1"/>
</dbReference>
<organismHost>
    <name type="scientific">Homo sapiens</name>
    <name type="common">Human</name>
    <dbReference type="NCBI Taxonomy" id="9606"/>
</organismHost>
<sequence>METVYCTFDHKLSLSDISTLCKLMNIVIPIPAHHHLIGSGNLGLYPIVSSNKDYVHIRNVLRTMVVTILQKVEGNQLVLRKPMTGQQYAIKNTGPFPWEKGDTLTLIPPLSTHSEEKLLKLGDWELTVPLVVPTAIAAEINIRLLCIGLIAVHREYNEMQTIIDELCSIQYRDVLIKLPDIVNDKQSMYSMKTACISLSMITAMAPDIVRTYIDRLTLEDHSMLLIKCQELLSKRTTLSTQRCGQLHATDIKDELKKIKSVLTMIDQINSLTNEKTYFVVCDVSADNRMATCIYKN</sequence>
<organism>
    <name type="scientific">Human herpesvirus 6B (strain Z29)</name>
    <name type="common">HHV-6 variant B</name>
    <name type="synonym">Human B lymphotropic virus</name>
    <dbReference type="NCBI Taxonomy" id="36351"/>
    <lineage>
        <taxon>Viruses</taxon>
        <taxon>Duplodnaviria</taxon>
        <taxon>Heunggongvirae</taxon>
        <taxon>Peploviricota</taxon>
        <taxon>Herviviricetes</taxon>
        <taxon>Herpesvirales</taxon>
        <taxon>Orthoherpesviridae</taxon>
        <taxon>Betaherpesvirinae</taxon>
        <taxon>Roseolovirus</taxon>
        <taxon>Roseolovirus humanbeta6b</taxon>
        <taxon>Human herpesvirus 6B</taxon>
    </lineage>
</organism>
<feature type="chain" id="PRO_0000408448" description="Triplex capsid protein 2">
    <location>
        <begin position="1"/>
        <end position="296"/>
    </location>
</feature>
<gene>
    <name evidence="1" type="primary">TRX2</name>
    <name type="ordered locus">U56</name>
</gene>